<protein>
    <recommendedName>
        <fullName evidence="1">Lipoate-protein ligase A</fullName>
        <ecNumber evidence="1">6.3.1.20</ecNumber>
    </recommendedName>
    <alternativeName>
        <fullName evidence="1">Lipoate--protein ligase</fullName>
    </alternativeName>
</protein>
<keyword id="KW-0067">ATP-binding</keyword>
<keyword id="KW-0963">Cytoplasm</keyword>
<keyword id="KW-0436">Ligase</keyword>
<keyword id="KW-0547">Nucleotide-binding</keyword>
<dbReference type="EC" id="6.3.1.20" evidence="1"/>
<dbReference type="EMBL" id="CP000243">
    <property type="protein sequence ID" value="ABE10557.1"/>
    <property type="molecule type" value="Genomic_DNA"/>
</dbReference>
<dbReference type="RefSeq" id="WP_000105871.1">
    <property type="nucleotide sequence ID" value="NZ_CP064825.1"/>
</dbReference>
<dbReference type="SMR" id="Q1R257"/>
<dbReference type="KEGG" id="eci:UTI89_C5157"/>
<dbReference type="HOGENOM" id="CLU_022986_0_1_6"/>
<dbReference type="UniPathway" id="UPA00537">
    <property type="reaction ID" value="UER00594"/>
</dbReference>
<dbReference type="UniPathway" id="UPA00537">
    <property type="reaction ID" value="UER00595"/>
</dbReference>
<dbReference type="Proteomes" id="UP000001952">
    <property type="component" value="Chromosome"/>
</dbReference>
<dbReference type="GO" id="GO:0005829">
    <property type="term" value="C:cytosol"/>
    <property type="evidence" value="ECO:0007669"/>
    <property type="project" value="TreeGrafter"/>
</dbReference>
<dbReference type="GO" id="GO:0005524">
    <property type="term" value="F:ATP binding"/>
    <property type="evidence" value="ECO:0007669"/>
    <property type="project" value="UniProtKB-KW"/>
</dbReference>
<dbReference type="GO" id="GO:0016979">
    <property type="term" value="F:lipoate-protein ligase activity"/>
    <property type="evidence" value="ECO:0007669"/>
    <property type="project" value="UniProtKB-UniRule"/>
</dbReference>
<dbReference type="GO" id="GO:0017118">
    <property type="term" value="F:lipoyltransferase activity"/>
    <property type="evidence" value="ECO:0007669"/>
    <property type="project" value="TreeGrafter"/>
</dbReference>
<dbReference type="GO" id="GO:0036211">
    <property type="term" value="P:protein modification process"/>
    <property type="evidence" value="ECO:0007669"/>
    <property type="project" value="InterPro"/>
</dbReference>
<dbReference type="CDD" id="cd16435">
    <property type="entry name" value="BPL_LplA_LipB"/>
    <property type="match status" value="1"/>
</dbReference>
<dbReference type="FunFam" id="3.30.390.50:FF:000002">
    <property type="entry name" value="Lipoate-protein ligase A"/>
    <property type="match status" value="1"/>
</dbReference>
<dbReference type="FunFam" id="3.30.930.10:FF:000024">
    <property type="entry name" value="Lipoate-protein ligase A"/>
    <property type="match status" value="1"/>
</dbReference>
<dbReference type="Gene3D" id="3.30.930.10">
    <property type="entry name" value="Bira Bifunctional Protein, Domain 2"/>
    <property type="match status" value="1"/>
</dbReference>
<dbReference type="Gene3D" id="3.30.390.50">
    <property type="entry name" value="CO dehydrogenase flavoprotein, C-terminal domain"/>
    <property type="match status" value="1"/>
</dbReference>
<dbReference type="HAMAP" id="MF_01602">
    <property type="entry name" value="LplA"/>
    <property type="match status" value="1"/>
</dbReference>
<dbReference type="InterPro" id="IPR045864">
    <property type="entry name" value="aa-tRNA-synth_II/BPL/LPL"/>
</dbReference>
<dbReference type="InterPro" id="IPR004143">
    <property type="entry name" value="BPL_LPL_catalytic"/>
</dbReference>
<dbReference type="InterPro" id="IPR023741">
    <property type="entry name" value="Lipoate_ligase_A"/>
</dbReference>
<dbReference type="InterPro" id="IPR019491">
    <property type="entry name" value="Lipoate_protein_ligase_C"/>
</dbReference>
<dbReference type="InterPro" id="IPR004562">
    <property type="entry name" value="LipoylTrfase_LipoateP_Ligase"/>
</dbReference>
<dbReference type="NCBIfam" id="TIGR00545">
    <property type="entry name" value="lipoyltrans"/>
    <property type="match status" value="1"/>
</dbReference>
<dbReference type="PANTHER" id="PTHR12561">
    <property type="entry name" value="LIPOATE-PROTEIN LIGASE"/>
    <property type="match status" value="1"/>
</dbReference>
<dbReference type="PANTHER" id="PTHR12561:SF3">
    <property type="entry name" value="LIPOYLTRANSFERASE 1, MITOCHONDRIAL"/>
    <property type="match status" value="1"/>
</dbReference>
<dbReference type="Pfam" id="PF10437">
    <property type="entry name" value="Lip_prot_lig_C"/>
    <property type="match status" value="1"/>
</dbReference>
<dbReference type="Pfam" id="PF21948">
    <property type="entry name" value="LplA-B_cat"/>
    <property type="match status" value="1"/>
</dbReference>
<dbReference type="SUPFAM" id="SSF55681">
    <property type="entry name" value="Class II aaRS and biotin synthetases"/>
    <property type="match status" value="1"/>
</dbReference>
<dbReference type="SUPFAM" id="SSF82649">
    <property type="entry name" value="SufE/NifU"/>
    <property type="match status" value="1"/>
</dbReference>
<dbReference type="PROSITE" id="PS51733">
    <property type="entry name" value="BPL_LPL_CATALYTIC"/>
    <property type="match status" value="1"/>
</dbReference>
<organism>
    <name type="scientific">Escherichia coli (strain UTI89 / UPEC)</name>
    <dbReference type="NCBI Taxonomy" id="364106"/>
    <lineage>
        <taxon>Bacteria</taxon>
        <taxon>Pseudomonadati</taxon>
        <taxon>Pseudomonadota</taxon>
        <taxon>Gammaproteobacteria</taxon>
        <taxon>Enterobacterales</taxon>
        <taxon>Enterobacteriaceae</taxon>
        <taxon>Escherichia</taxon>
    </lineage>
</organism>
<accession>Q1R257</accession>
<reference key="1">
    <citation type="journal article" date="2006" name="Proc. Natl. Acad. Sci. U.S.A.">
        <title>Identification of genes subject to positive selection in uropathogenic strains of Escherichia coli: a comparative genomics approach.</title>
        <authorList>
            <person name="Chen S.L."/>
            <person name="Hung C.-S."/>
            <person name="Xu J."/>
            <person name="Reigstad C.S."/>
            <person name="Magrini V."/>
            <person name="Sabo A."/>
            <person name="Blasiar D."/>
            <person name="Bieri T."/>
            <person name="Meyer R.R."/>
            <person name="Ozersky P."/>
            <person name="Armstrong J.R."/>
            <person name="Fulton R.S."/>
            <person name="Latreille J.P."/>
            <person name="Spieth J."/>
            <person name="Hooton T.M."/>
            <person name="Mardis E.R."/>
            <person name="Hultgren S.J."/>
            <person name="Gordon J.I."/>
        </authorList>
    </citation>
    <scope>NUCLEOTIDE SEQUENCE [LARGE SCALE GENOMIC DNA]</scope>
    <source>
        <strain>UTI89 / UPEC</strain>
    </source>
</reference>
<feature type="chain" id="PRO_1000069381" description="Lipoate-protein ligase A">
    <location>
        <begin position="1"/>
        <end position="338"/>
    </location>
</feature>
<feature type="domain" description="BPL/LPL catalytic" evidence="2">
    <location>
        <begin position="29"/>
        <end position="216"/>
    </location>
</feature>
<feature type="binding site" evidence="1">
    <location>
        <position position="71"/>
    </location>
    <ligand>
        <name>ATP</name>
        <dbReference type="ChEBI" id="CHEBI:30616"/>
    </ligand>
</feature>
<feature type="binding site" evidence="1">
    <location>
        <begin position="76"/>
        <end position="79"/>
    </location>
    <ligand>
        <name>ATP</name>
        <dbReference type="ChEBI" id="CHEBI:30616"/>
    </ligand>
</feature>
<feature type="binding site" evidence="1">
    <location>
        <position position="134"/>
    </location>
    <ligand>
        <name>(R)-lipoate</name>
        <dbReference type="ChEBI" id="CHEBI:83088"/>
    </ligand>
</feature>
<feature type="binding site" evidence="1">
    <location>
        <position position="134"/>
    </location>
    <ligand>
        <name>ATP</name>
        <dbReference type="ChEBI" id="CHEBI:30616"/>
    </ligand>
</feature>
<name>LPLA_ECOUT</name>
<comment type="function">
    <text evidence="1">Catalyzes both the ATP-dependent activation of exogenously supplied lipoate to lipoyl-AMP and the transfer of the activated lipoyl onto the lipoyl domains of lipoate-dependent enzymes.</text>
</comment>
<comment type="catalytic activity">
    <reaction evidence="1">
        <text>L-lysyl-[lipoyl-carrier protein] + (R)-lipoate + ATP = N(6)-[(R)-lipoyl]-L-lysyl-[lipoyl-carrier protein] + AMP + diphosphate + H(+)</text>
        <dbReference type="Rhea" id="RHEA:49288"/>
        <dbReference type="Rhea" id="RHEA-COMP:10500"/>
        <dbReference type="Rhea" id="RHEA-COMP:10502"/>
        <dbReference type="ChEBI" id="CHEBI:15378"/>
        <dbReference type="ChEBI" id="CHEBI:29969"/>
        <dbReference type="ChEBI" id="CHEBI:30616"/>
        <dbReference type="ChEBI" id="CHEBI:33019"/>
        <dbReference type="ChEBI" id="CHEBI:83088"/>
        <dbReference type="ChEBI" id="CHEBI:83099"/>
        <dbReference type="ChEBI" id="CHEBI:456215"/>
        <dbReference type="EC" id="6.3.1.20"/>
    </reaction>
</comment>
<comment type="pathway">
    <text evidence="1">Protein modification; protein lipoylation via exogenous pathway; protein N(6)-(lipoyl)lysine from lipoate: step 1/2.</text>
</comment>
<comment type="pathway">
    <text evidence="1">Protein modification; protein lipoylation via exogenous pathway; protein N(6)-(lipoyl)lysine from lipoate: step 2/2.</text>
</comment>
<comment type="subunit">
    <text evidence="1">Monomer.</text>
</comment>
<comment type="subcellular location">
    <subcellularLocation>
        <location evidence="1">Cytoplasm</location>
    </subcellularLocation>
</comment>
<comment type="miscellaneous">
    <text evidence="1">In the transfer reaction, the free carboxyl group of lipoic acid is attached via an amide linkage to the epsilon-amino group of a specific lysine residue of lipoyl domains of lipoate-dependent enzymes.</text>
</comment>
<comment type="similarity">
    <text evidence="1">Belongs to the LplA family.</text>
</comment>
<proteinExistence type="inferred from homology"/>
<sequence length="338" mass="37897">MSTLRLLISDSYDPWFNLAVEECIFRQMPATQRVLFLWRNADTVVIGRAQNPWKECNTRRMEEDNVRLARRSSGGGAVFHDLGNTCFTFMAGKPEYDKTISTSIVLNALNALGVSAEASGRNDLVVKTAEGDRKVSGSAYRETKDRGFHHGTLLLNSDLSRLANYLNPDKKKLAAKGITSVRSRVTNLTELLPGITHEQVCEAITEAFFAHYGERVEAEIISPDKTPDLPNFAETFARQSSWEWNFGQAPAFSHLLDERFTWGGVELHFDVEKGHITRAQVFTDSLNPAPLEALAGRLQGCLYRADMLQQECEALLVDFPEQEKELRELSAWIAGAVR</sequence>
<evidence type="ECO:0000255" key="1">
    <source>
        <dbReference type="HAMAP-Rule" id="MF_01602"/>
    </source>
</evidence>
<evidence type="ECO:0000255" key="2">
    <source>
        <dbReference type="PROSITE-ProRule" id="PRU01067"/>
    </source>
</evidence>
<gene>
    <name evidence="1" type="primary">lplA</name>
    <name type="ordered locus">UTI89_C5157</name>
</gene>